<keyword id="KW-0002">3D-structure</keyword>
<keyword id="KW-0007">Acetylation</keyword>
<keyword id="KW-0025">Alternative splicing</keyword>
<keyword id="KW-0963">Cytoplasm</keyword>
<keyword id="KW-0256">Endoplasmic reticulum</keyword>
<keyword id="KW-0539">Nucleus</keyword>
<keyword id="KW-0597">Phosphoprotein</keyword>
<keyword id="KW-1267">Proteomics identification</keyword>
<keyword id="KW-1185">Reference proteome</keyword>
<keyword id="KW-0687">Ribonucleoprotein</keyword>
<keyword id="KW-0694">RNA-binding</keyword>
<keyword id="KW-0733">Signal recognition particle</keyword>
<evidence type="ECO:0000250" key="1">
    <source>
        <dbReference type="UniProtKB" id="P38687"/>
    </source>
</evidence>
<evidence type="ECO:0000250" key="2">
    <source>
        <dbReference type="UniProtKB" id="Q00004"/>
    </source>
</evidence>
<evidence type="ECO:0000256" key="3">
    <source>
        <dbReference type="SAM" id="MobiDB-lite"/>
    </source>
</evidence>
<evidence type="ECO:0000269" key="4">
    <source>
    </source>
</evidence>
<evidence type="ECO:0000269" key="5">
    <source>
    </source>
</evidence>
<evidence type="ECO:0000269" key="6">
    <source>
    </source>
</evidence>
<evidence type="ECO:0000269" key="7">
    <source>
    </source>
</evidence>
<evidence type="ECO:0000269" key="8">
    <source>
    </source>
</evidence>
<evidence type="ECO:0000269" key="9">
    <source>
    </source>
</evidence>
<evidence type="ECO:0000303" key="10">
    <source>
    </source>
</evidence>
<evidence type="ECO:0000303" key="11">
    <source>
    </source>
</evidence>
<evidence type="ECO:0000305" key="12"/>
<evidence type="ECO:0007744" key="13">
    <source>
        <dbReference type="PDB" id="4P3E"/>
    </source>
</evidence>
<evidence type="ECO:0007744" key="14">
    <source>
        <dbReference type="PDB" id="4P3F"/>
    </source>
</evidence>
<evidence type="ECO:0007744" key="15">
    <source>
        <dbReference type="PDB" id="5M72"/>
    </source>
</evidence>
<evidence type="ECO:0007744" key="16">
    <source>
        <dbReference type="PDB" id="5M73"/>
    </source>
</evidence>
<evidence type="ECO:0007744" key="17">
    <source>
        <dbReference type="PDB" id="5WRV"/>
    </source>
</evidence>
<evidence type="ECO:0007744" key="18">
    <source>
        <dbReference type="PDB" id="7NFX"/>
    </source>
</evidence>
<evidence type="ECO:0007744" key="19">
    <source>
    </source>
</evidence>
<evidence type="ECO:0007744" key="20">
    <source>
    </source>
</evidence>
<evidence type="ECO:0007744" key="21">
    <source>
    </source>
</evidence>
<evidence type="ECO:0007829" key="22">
    <source>
        <dbReference type="PDB" id="4P3E"/>
    </source>
</evidence>
<evidence type="ECO:0007829" key="23">
    <source>
        <dbReference type="PDB" id="4P3F"/>
    </source>
</evidence>
<evidence type="ECO:0007829" key="24">
    <source>
        <dbReference type="PDB" id="5M72"/>
    </source>
</evidence>
<evidence type="ECO:0007829" key="25">
    <source>
        <dbReference type="PDB" id="8QVW"/>
    </source>
</evidence>
<feature type="chain" id="PRO_0000135227" description="Signal recognition particle subunit SRP68">
    <location>
        <begin position="1"/>
        <end position="627"/>
    </location>
</feature>
<feature type="region of interest" description="Disordered" evidence="3">
    <location>
        <begin position="1"/>
        <end position="53"/>
    </location>
</feature>
<feature type="region of interest" description="RNA-binding" evidence="5">
    <location>
        <begin position="52"/>
        <end position="252"/>
    </location>
</feature>
<feature type="region of interest" description="Required for interaction with SRP72" evidence="5 7">
    <location>
        <begin position="588"/>
        <end position="610"/>
    </location>
</feature>
<feature type="compositionally biased region" description="Gly residues" evidence="3">
    <location>
        <begin position="8"/>
        <end position="33"/>
    </location>
</feature>
<feature type="compositionally biased region" description="Basic and acidic residues" evidence="3">
    <location>
        <begin position="34"/>
        <end position="43"/>
    </location>
</feature>
<feature type="modified residue" description="Phosphoserine" evidence="19">
    <location>
        <position position="48"/>
    </location>
</feature>
<feature type="modified residue" description="Phosphoserine" evidence="21">
    <location>
        <position position="241"/>
    </location>
</feature>
<feature type="modified residue" description="N6-acetyllysine" evidence="20">
    <location>
        <position position="452"/>
    </location>
</feature>
<feature type="splice variant" id="VSP_045132" description="In isoform 3." evidence="10">
    <location>
        <begin position="1"/>
        <end position="339"/>
    </location>
</feature>
<feature type="splice variant" id="VSP_046944" description="In isoform 4." evidence="10">
    <location>
        <begin position="84"/>
        <end position="121"/>
    </location>
</feature>
<feature type="splice variant" id="VSP_008347" description="In isoform 2." evidence="11">
    <location>
        <begin position="256"/>
        <end position="286"/>
    </location>
</feature>
<feature type="mutagenesis site" description="Loss of interaction with SRP72." evidence="6">
    <original>Y</original>
    <variation>A</variation>
    <location>
        <position position="86"/>
    </location>
</feature>
<feature type="mutagenesis site" description="Loss of interaction with SRP72. Diminished localization to endoplasmic reticulum." evidence="7">
    <original>F</original>
    <variation>L</variation>
    <location>
        <position position="590"/>
    </location>
</feature>
<feature type="mutagenesis site" description="Loss of interaction with SRP72." evidence="6">
    <original>D</original>
    <variation>A</variation>
    <location>
        <position position="592"/>
    </location>
</feature>
<feature type="mutagenesis site" description="Loss of interaction with SRP72; when associated with A-56 in SRP72." evidence="6">
    <original>V</original>
    <variation>A</variation>
    <location>
        <position position="598"/>
    </location>
</feature>
<feature type="mutagenesis site" description="Loss of interaction with SRP72." evidence="6">
    <original>F</original>
    <variation>A</variation>
    <location>
        <position position="600"/>
    </location>
</feature>
<feature type="mutagenesis site" description="Reduced interaction with SRP72." evidence="7">
    <original>Q</original>
    <variation>H</variation>
    <location>
        <position position="609"/>
    </location>
</feature>
<feature type="sequence conflict" description="In Ref. 1; AAF24308." evidence="12" ref="1">
    <location>
        <begin position="15"/>
        <end position="19"/>
    </location>
</feature>
<feature type="sequence conflict" description="In Ref. 1; AAF24308." evidence="12" ref="1">
    <location>
        <begin position="27"/>
        <end position="29"/>
    </location>
</feature>
<feature type="sequence conflict" description="In Ref. 1; AAF24308." evidence="12" ref="1">
    <original>E</original>
    <variation>K</variation>
    <location>
        <position position="174"/>
    </location>
</feature>
<feature type="sequence conflict" description="In Ref. 1; AAF24308." evidence="12" ref="1">
    <original>DA</original>
    <variation>ES</variation>
    <location>
        <begin position="534"/>
        <end position="535"/>
    </location>
</feature>
<feature type="sequence conflict" description="In Ref. 2; BAG54299." evidence="12" ref="2">
    <original>K</original>
    <variation>E</variation>
    <location>
        <position position="606"/>
    </location>
</feature>
<feature type="helix" evidence="23">
    <location>
        <begin position="62"/>
        <end position="72"/>
    </location>
</feature>
<feature type="helix" evidence="23">
    <location>
        <begin position="75"/>
        <end position="77"/>
    </location>
</feature>
<feature type="helix" evidence="23">
    <location>
        <begin position="80"/>
        <end position="103"/>
    </location>
</feature>
<feature type="turn" evidence="23">
    <location>
        <begin position="104"/>
        <end position="106"/>
    </location>
</feature>
<feature type="strand" evidence="23">
    <location>
        <begin position="119"/>
        <end position="121"/>
    </location>
</feature>
<feature type="helix" evidence="23">
    <location>
        <begin position="122"/>
        <end position="143"/>
    </location>
</feature>
<feature type="turn" evidence="22">
    <location>
        <begin position="145"/>
        <end position="147"/>
    </location>
</feature>
<feature type="helix" evidence="23">
    <location>
        <begin position="151"/>
        <end position="172"/>
    </location>
</feature>
<feature type="helix" evidence="23">
    <location>
        <begin position="180"/>
        <end position="200"/>
    </location>
</feature>
<feature type="helix" evidence="23">
    <location>
        <begin position="204"/>
        <end position="222"/>
    </location>
</feature>
<feature type="helix" evidence="23">
    <location>
        <begin position="227"/>
        <end position="251"/>
    </location>
</feature>
<feature type="helix" evidence="25">
    <location>
        <begin position="554"/>
        <end position="556"/>
    </location>
</feature>
<feature type="helix" evidence="25">
    <location>
        <begin position="565"/>
        <end position="567"/>
    </location>
</feature>
<feature type="helix" evidence="24">
    <location>
        <begin position="593"/>
        <end position="597"/>
    </location>
</feature>
<feature type="helix" evidence="24">
    <location>
        <begin position="604"/>
        <end position="606"/>
    </location>
</feature>
<organism>
    <name type="scientific">Homo sapiens</name>
    <name type="common">Human</name>
    <dbReference type="NCBI Taxonomy" id="9606"/>
    <lineage>
        <taxon>Eukaryota</taxon>
        <taxon>Metazoa</taxon>
        <taxon>Chordata</taxon>
        <taxon>Craniata</taxon>
        <taxon>Vertebrata</taxon>
        <taxon>Euteleostomi</taxon>
        <taxon>Mammalia</taxon>
        <taxon>Eutheria</taxon>
        <taxon>Euarchontoglires</taxon>
        <taxon>Primates</taxon>
        <taxon>Haplorrhini</taxon>
        <taxon>Catarrhini</taxon>
        <taxon>Hominidae</taxon>
        <taxon>Homo</taxon>
    </lineage>
</organism>
<protein>
    <recommendedName>
        <fullName>Signal recognition particle subunit SRP68</fullName>
        <shortName>SRP68</shortName>
    </recommendedName>
    <alternativeName>
        <fullName>Signal recognition particle 68 kDa protein</fullName>
    </alternativeName>
</protein>
<reference key="1">
    <citation type="journal article" date="2000" name="Proc. Natl. Acad. Sci. U.S.A.">
        <title>Signal recognition particle components in the nucleolus.</title>
        <authorList>
            <person name="Politz J.C."/>
            <person name="Yarovoi S."/>
            <person name="Kilroy S.M."/>
            <person name="Gowda K."/>
            <person name="Zwieb C."/>
            <person name="Pederson T."/>
        </authorList>
    </citation>
    <scope>NUCLEOTIDE SEQUENCE [MRNA] (ISOFORM 1)</scope>
    <scope>SUBCELLULAR LOCATION</scope>
</reference>
<reference key="2">
    <citation type="journal article" date="2004" name="Nat. Genet.">
        <title>Complete sequencing and characterization of 21,243 full-length human cDNAs.</title>
        <authorList>
            <person name="Ota T."/>
            <person name="Suzuki Y."/>
            <person name="Nishikawa T."/>
            <person name="Otsuki T."/>
            <person name="Sugiyama T."/>
            <person name="Irie R."/>
            <person name="Wakamatsu A."/>
            <person name="Hayashi K."/>
            <person name="Sato H."/>
            <person name="Nagai K."/>
            <person name="Kimura K."/>
            <person name="Makita H."/>
            <person name="Sekine M."/>
            <person name="Obayashi M."/>
            <person name="Nishi T."/>
            <person name="Shibahara T."/>
            <person name="Tanaka T."/>
            <person name="Ishii S."/>
            <person name="Yamamoto J."/>
            <person name="Saito K."/>
            <person name="Kawai Y."/>
            <person name="Isono Y."/>
            <person name="Nakamura Y."/>
            <person name="Nagahari K."/>
            <person name="Murakami K."/>
            <person name="Yasuda T."/>
            <person name="Iwayanagi T."/>
            <person name="Wagatsuma M."/>
            <person name="Shiratori A."/>
            <person name="Sudo H."/>
            <person name="Hosoiri T."/>
            <person name="Kaku Y."/>
            <person name="Kodaira H."/>
            <person name="Kondo H."/>
            <person name="Sugawara M."/>
            <person name="Takahashi M."/>
            <person name="Kanda K."/>
            <person name="Yokoi T."/>
            <person name="Furuya T."/>
            <person name="Kikkawa E."/>
            <person name="Omura Y."/>
            <person name="Abe K."/>
            <person name="Kamihara K."/>
            <person name="Katsuta N."/>
            <person name="Sato K."/>
            <person name="Tanikawa M."/>
            <person name="Yamazaki M."/>
            <person name="Ninomiya K."/>
            <person name="Ishibashi T."/>
            <person name="Yamashita H."/>
            <person name="Murakawa K."/>
            <person name="Fujimori K."/>
            <person name="Tanai H."/>
            <person name="Kimata M."/>
            <person name="Watanabe M."/>
            <person name="Hiraoka S."/>
            <person name="Chiba Y."/>
            <person name="Ishida S."/>
            <person name="Ono Y."/>
            <person name="Takiguchi S."/>
            <person name="Watanabe S."/>
            <person name="Yosida M."/>
            <person name="Hotuta T."/>
            <person name="Kusano J."/>
            <person name="Kanehori K."/>
            <person name="Takahashi-Fujii A."/>
            <person name="Hara H."/>
            <person name="Tanase T.-O."/>
            <person name="Nomura Y."/>
            <person name="Togiya S."/>
            <person name="Komai F."/>
            <person name="Hara R."/>
            <person name="Takeuchi K."/>
            <person name="Arita M."/>
            <person name="Imose N."/>
            <person name="Musashino K."/>
            <person name="Yuuki H."/>
            <person name="Oshima A."/>
            <person name="Sasaki N."/>
            <person name="Aotsuka S."/>
            <person name="Yoshikawa Y."/>
            <person name="Matsunawa H."/>
            <person name="Ichihara T."/>
            <person name="Shiohata N."/>
            <person name="Sano S."/>
            <person name="Moriya S."/>
            <person name="Momiyama H."/>
            <person name="Satoh N."/>
            <person name="Takami S."/>
            <person name="Terashima Y."/>
            <person name="Suzuki O."/>
            <person name="Nakagawa S."/>
            <person name="Senoh A."/>
            <person name="Mizoguchi H."/>
            <person name="Goto Y."/>
            <person name="Shimizu F."/>
            <person name="Wakebe H."/>
            <person name="Hishigaki H."/>
            <person name="Watanabe T."/>
            <person name="Sugiyama A."/>
            <person name="Takemoto M."/>
            <person name="Kawakami B."/>
            <person name="Yamazaki M."/>
            <person name="Watanabe K."/>
            <person name="Kumagai A."/>
            <person name="Itakura S."/>
            <person name="Fukuzumi Y."/>
            <person name="Fujimori Y."/>
            <person name="Komiyama M."/>
            <person name="Tashiro H."/>
            <person name="Tanigami A."/>
            <person name="Fujiwara T."/>
            <person name="Ono T."/>
            <person name="Yamada K."/>
            <person name="Fujii Y."/>
            <person name="Ozaki K."/>
            <person name="Hirao M."/>
            <person name="Ohmori Y."/>
            <person name="Kawabata A."/>
            <person name="Hikiji T."/>
            <person name="Kobatake N."/>
            <person name="Inagaki H."/>
            <person name="Ikema Y."/>
            <person name="Okamoto S."/>
            <person name="Okitani R."/>
            <person name="Kawakami T."/>
            <person name="Noguchi S."/>
            <person name="Itoh T."/>
            <person name="Shigeta K."/>
            <person name="Senba T."/>
            <person name="Matsumura K."/>
            <person name="Nakajima Y."/>
            <person name="Mizuno T."/>
            <person name="Morinaga M."/>
            <person name="Sasaki M."/>
            <person name="Togashi T."/>
            <person name="Oyama M."/>
            <person name="Hata H."/>
            <person name="Watanabe M."/>
            <person name="Komatsu T."/>
            <person name="Mizushima-Sugano J."/>
            <person name="Satoh T."/>
            <person name="Shirai Y."/>
            <person name="Takahashi Y."/>
            <person name="Nakagawa K."/>
            <person name="Okumura K."/>
            <person name="Nagase T."/>
            <person name="Nomura N."/>
            <person name="Kikuchi H."/>
            <person name="Masuho Y."/>
            <person name="Yamashita R."/>
            <person name="Nakai K."/>
            <person name="Yada T."/>
            <person name="Nakamura Y."/>
            <person name="Ohara O."/>
            <person name="Isogai T."/>
            <person name="Sugano S."/>
        </authorList>
    </citation>
    <scope>NUCLEOTIDE SEQUENCE [LARGE SCALE MRNA] (ISOFORMS 1; 3 AND 4)</scope>
    <source>
        <tissue>Liver</tissue>
        <tissue>Mammary gland</tissue>
        <tissue>Thymus</tissue>
    </source>
</reference>
<reference key="3">
    <citation type="journal article" date="2006" name="Nature">
        <title>DNA sequence of human chromosome 17 and analysis of rearrangement in the human lineage.</title>
        <authorList>
            <person name="Zody M.C."/>
            <person name="Garber M."/>
            <person name="Adams D.J."/>
            <person name="Sharpe T."/>
            <person name="Harrow J."/>
            <person name="Lupski J.R."/>
            <person name="Nicholson C."/>
            <person name="Searle S.M."/>
            <person name="Wilming L."/>
            <person name="Young S.K."/>
            <person name="Abouelleil A."/>
            <person name="Allen N.R."/>
            <person name="Bi W."/>
            <person name="Bloom T."/>
            <person name="Borowsky M.L."/>
            <person name="Bugalter B.E."/>
            <person name="Butler J."/>
            <person name="Chang J.L."/>
            <person name="Chen C.-K."/>
            <person name="Cook A."/>
            <person name="Corum B."/>
            <person name="Cuomo C.A."/>
            <person name="de Jong P.J."/>
            <person name="DeCaprio D."/>
            <person name="Dewar K."/>
            <person name="FitzGerald M."/>
            <person name="Gilbert J."/>
            <person name="Gibson R."/>
            <person name="Gnerre S."/>
            <person name="Goldstein S."/>
            <person name="Grafham D.V."/>
            <person name="Grocock R."/>
            <person name="Hafez N."/>
            <person name="Hagopian D.S."/>
            <person name="Hart E."/>
            <person name="Norman C.H."/>
            <person name="Humphray S."/>
            <person name="Jaffe D.B."/>
            <person name="Jones M."/>
            <person name="Kamal M."/>
            <person name="Khodiyar V.K."/>
            <person name="LaButti K."/>
            <person name="Laird G."/>
            <person name="Lehoczky J."/>
            <person name="Liu X."/>
            <person name="Lokyitsang T."/>
            <person name="Loveland J."/>
            <person name="Lui A."/>
            <person name="Macdonald P."/>
            <person name="Major J.E."/>
            <person name="Matthews L."/>
            <person name="Mauceli E."/>
            <person name="McCarroll S.A."/>
            <person name="Mihalev A.H."/>
            <person name="Mudge J."/>
            <person name="Nguyen C."/>
            <person name="Nicol R."/>
            <person name="O'Leary S.B."/>
            <person name="Osoegawa K."/>
            <person name="Schwartz D.C."/>
            <person name="Shaw-Smith C."/>
            <person name="Stankiewicz P."/>
            <person name="Steward C."/>
            <person name="Swarbreck D."/>
            <person name="Venkataraman V."/>
            <person name="Whittaker C.A."/>
            <person name="Yang X."/>
            <person name="Zimmer A.R."/>
            <person name="Bradley A."/>
            <person name="Hubbard T."/>
            <person name="Birren B.W."/>
            <person name="Rogers J."/>
            <person name="Lander E.S."/>
            <person name="Nusbaum C."/>
        </authorList>
    </citation>
    <scope>NUCLEOTIDE SEQUENCE [LARGE SCALE GENOMIC DNA]</scope>
</reference>
<reference key="4">
    <citation type="submission" date="2005-07" db="EMBL/GenBank/DDBJ databases">
        <authorList>
            <person name="Mural R.J."/>
            <person name="Istrail S."/>
            <person name="Sutton G.G."/>
            <person name="Florea L."/>
            <person name="Halpern A.L."/>
            <person name="Mobarry C.M."/>
            <person name="Lippert R."/>
            <person name="Walenz B."/>
            <person name="Shatkay H."/>
            <person name="Dew I."/>
            <person name="Miller J.R."/>
            <person name="Flanigan M.J."/>
            <person name="Edwards N.J."/>
            <person name="Bolanos R."/>
            <person name="Fasulo D."/>
            <person name="Halldorsson B.V."/>
            <person name="Hannenhalli S."/>
            <person name="Turner R."/>
            <person name="Yooseph S."/>
            <person name="Lu F."/>
            <person name="Nusskern D.R."/>
            <person name="Shue B.C."/>
            <person name="Zheng X.H."/>
            <person name="Zhong F."/>
            <person name="Delcher A.L."/>
            <person name="Huson D.H."/>
            <person name="Kravitz S.A."/>
            <person name="Mouchard L."/>
            <person name="Reinert K."/>
            <person name="Remington K.A."/>
            <person name="Clark A.G."/>
            <person name="Waterman M.S."/>
            <person name="Eichler E.E."/>
            <person name="Adams M.D."/>
            <person name="Hunkapiller M.W."/>
            <person name="Myers E.W."/>
            <person name="Venter J.C."/>
        </authorList>
    </citation>
    <scope>NUCLEOTIDE SEQUENCE [LARGE SCALE GENOMIC DNA]</scope>
</reference>
<reference key="5">
    <citation type="journal article" date="2004" name="Genome Res.">
        <title>The status, quality, and expansion of the NIH full-length cDNA project: the Mammalian Gene Collection (MGC).</title>
        <authorList>
            <consortium name="The MGC Project Team"/>
        </authorList>
    </citation>
    <scope>NUCLEOTIDE SEQUENCE [LARGE SCALE MRNA] (ISOFORM 2)</scope>
    <source>
        <tissue>Skin</tissue>
    </source>
</reference>
<reference key="6">
    <citation type="journal article" date="2006" name="Protein Sci.">
        <title>Protein SRP68 of human signal recognition particle: identification of the RNA and SRP72 binding domains.</title>
        <authorList>
            <person name="Iakhiaeva E."/>
            <person name="Bhuiyan S.H."/>
            <person name="Yin J."/>
            <person name="Zwieb C."/>
        </authorList>
    </citation>
    <scope>FUNCTION</scope>
    <scope>RNA BINDING</scope>
    <scope>SUBUNIT</scope>
    <scope>INTERACTION WITH SRP72</scope>
    <scope>DOMAIN</scope>
</reference>
<reference key="7">
    <citation type="journal article" date="2008" name="J. Proteome Res.">
        <title>Phosphoproteome of resting human platelets.</title>
        <authorList>
            <person name="Zahedi R.P."/>
            <person name="Lewandrowski U."/>
            <person name="Wiesner J."/>
            <person name="Wortelkamp S."/>
            <person name="Moebius J."/>
            <person name="Schuetz C."/>
            <person name="Walter U."/>
            <person name="Gambaryan S."/>
            <person name="Sickmann A."/>
        </authorList>
    </citation>
    <scope>PHOSPHORYLATION [LARGE SCALE ANALYSIS] AT SER-48</scope>
    <scope>IDENTIFICATION BY MASS SPECTROMETRY [LARGE SCALE ANALYSIS]</scope>
    <source>
        <tissue>Platelet</tissue>
    </source>
</reference>
<reference key="8">
    <citation type="journal article" date="2008" name="Proc. Natl. Acad. Sci. U.S.A.">
        <title>A quantitative atlas of mitotic phosphorylation.</title>
        <authorList>
            <person name="Dephoure N."/>
            <person name="Zhou C."/>
            <person name="Villen J."/>
            <person name="Beausoleil S.A."/>
            <person name="Bakalarski C.E."/>
            <person name="Elledge S.J."/>
            <person name="Gygi S.P."/>
        </authorList>
    </citation>
    <scope>IDENTIFICATION BY MASS SPECTROMETRY [LARGE SCALE ANALYSIS]</scope>
    <source>
        <tissue>Cervix carcinoma</tissue>
    </source>
</reference>
<reference key="9">
    <citation type="journal article" date="2009" name="Science">
        <title>Lysine acetylation targets protein complexes and co-regulates major cellular functions.</title>
        <authorList>
            <person name="Choudhary C."/>
            <person name="Kumar C."/>
            <person name="Gnad F."/>
            <person name="Nielsen M.L."/>
            <person name="Rehman M."/>
            <person name="Walther T.C."/>
            <person name="Olsen J.V."/>
            <person name="Mann M."/>
        </authorList>
    </citation>
    <scope>ACETYLATION [LARGE SCALE ANALYSIS] AT LYS-452</scope>
    <scope>IDENTIFICATION BY MASS SPECTROMETRY [LARGE SCALE ANALYSIS]</scope>
</reference>
<reference key="10">
    <citation type="journal article" date="2010" name="Sci. Signal.">
        <title>Quantitative phosphoproteomics reveals widespread full phosphorylation site occupancy during mitosis.</title>
        <authorList>
            <person name="Olsen J.V."/>
            <person name="Vermeulen M."/>
            <person name="Santamaria A."/>
            <person name="Kumar C."/>
            <person name="Miller M.L."/>
            <person name="Jensen L.J."/>
            <person name="Gnad F."/>
            <person name="Cox J."/>
            <person name="Jensen T.S."/>
            <person name="Nigg E.A."/>
            <person name="Brunak S."/>
            <person name="Mann M."/>
        </authorList>
    </citation>
    <scope>IDENTIFICATION BY MASS SPECTROMETRY [LARGE SCALE ANALYSIS]</scope>
    <source>
        <tissue>Cervix carcinoma</tissue>
    </source>
</reference>
<reference key="11">
    <citation type="journal article" date="2011" name="BMC Syst. Biol.">
        <title>Initial characterization of the human central proteome.</title>
        <authorList>
            <person name="Burkard T.R."/>
            <person name="Planyavsky M."/>
            <person name="Kaupe I."/>
            <person name="Breitwieser F.P."/>
            <person name="Buerckstuemmer T."/>
            <person name="Bennett K.L."/>
            <person name="Superti-Furga G."/>
            <person name="Colinge J."/>
        </authorList>
    </citation>
    <scope>IDENTIFICATION BY MASS SPECTROMETRY [LARGE SCALE ANALYSIS]</scope>
</reference>
<reference key="12">
    <citation type="journal article" date="2012" name="Proc. Natl. Acad. Sci. U.S.A.">
        <title>N-terminal acetylome analyses and functional insights of the N-terminal acetyltransferase NatB.</title>
        <authorList>
            <person name="Van Damme P."/>
            <person name="Lasa M."/>
            <person name="Polevoda B."/>
            <person name="Gazquez C."/>
            <person name="Elosegui-Artola A."/>
            <person name="Kim D.S."/>
            <person name="De Juan-Pardo E."/>
            <person name="Demeyer K."/>
            <person name="Hole K."/>
            <person name="Larrea E."/>
            <person name="Timmerman E."/>
            <person name="Prieto J."/>
            <person name="Arnesen T."/>
            <person name="Sherman F."/>
            <person name="Gevaert K."/>
            <person name="Aldabe R."/>
        </authorList>
    </citation>
    <scope>IDENTIFICATION BY MASS SPECTROMETRY [LARGE SCALE ANALYSIS]</scope>
</reference>
<reference key="13">
    <citation type="journal article" date="2013" name="J. Proteome Res.">
        <title>Toward a comprehensive characterization of a human cancer cell phosphoproteome.</title>
        <authorList>
            <person name="Zhou H."/>
            <person name="Di Palma S."/>
            <person name="Preisinger C."/>
            <person name="Peng M."/>
            <person name="Polat A.N."/>
            <person name="Heck A.J."/>
            <person name="Mohammed S."/>
        </authorList>
    </citation>
    <scope>PHOSPHORYLATION [LARGE SCALE ANALYSIS] AT SER-241</scope>
    <scope>IDENTIFICATION BY MASS SPECTROMETRY [LARGE SCALE ANALYSIS]</scope>
    <source>
        <tissue>Cervix carcinoma</tissue>
    </source>
</reference>
<reference key="14">
    <citation type="journal article" date="2014" name="J. Proteomics">
        <title>An enzyme assisted RP-RPLC approach for in-depth analysis of human liver phosphoproteome.</title>
        <authorList>
            <person name="Bian Y."/>
            <person name="Song C."/>
            <person name="Cheng K."/>
            <person name="Dong M."/>
            <person name="Wang F."/>
            <person name="Huang J."/>
            <person name="Sun D."/>
            <person name="Wang L."/>
            <person name="Ye M."/>
            <person name="Zou H."/>
        </authorList>
    </citation>
    <scope>IDENTIFICATION BY MASS SPECTROMETRY [LARGE SCALE ANALYSIS]</scope>
    <source>
        <tissue>Liver</tissue>
    </source>
</reference>
<reference key="15">
    <citation type="journal article" date="2015" name="Proteomics">
        <title>N-terminome analysis of the human mitochondrial proteome.</title>
        <authorList>
            <person name="Vaca Jacome A.S."/>
            <person name="Rabilloud T."/>
            <person name="Schaeffer-Reiss C."/>
            <person name="Rompais M."/>
            <person name="Ayoub D."/>
            <person name="Lane L."/>
            <person name="Bairoch A."/>
            <person name="Van Dorsselaer A."/>
            <person name="Carapito C."/>
        </authorList>
    </citation>
    <scope>IDENTIFICATION BY MASS SPECTROMETRY [LARGE SCALE ANALYSIS]</scope>
</reference>
<reference key="16">
    <citation type="journal article" date="2021" name="Haematologica">
        <title>Identification of biallelic germline variants of SRP68 in a sporadic case with severe congenital neutropenia.</title>
        <authorList>
            <person name="Schmaltz-Panneau B."/>
            <person name="Pagnier A."/>
            <person name="Clauin S."/>
            <person name="Buratti J."/>
            <person name="Marty C."/>
            <person name="Fenneteau O."/>
            <person name="Dieterich K."/>
            <person name="Beaupain B."/>
            <person name="Donadieu J."/>
            <person name="Plo I."/>
            <person name="Bellanne-Chantelot C."/>
        </authorList>
    </citation>
    <scope>INVOLVEMENT IN SCN10</scope>
</reference>
<reference evidence="13 14" key="17">
    <citation type="journal article" date="2014" name="Science">
        <title>SRP RNA remodeling by SRP68 explains its role in protein translocation.</title>
        <authorList>
            <person name="Grotwinkel J.T."/>
            <person name="Wild K."/>
            <person name="Segnitz B."/>
            <person name="Sinning I."/>
        </authorList>
    </citation>
    <scope>X-RAY CRYSTALLOGRAPHY (1.70 ANGSTROMS) OF 47-254 IN COMPLEX WITH SRP19 AND 7SL RNA</scope>
</reference>
<reference evidence="17" key="18">
    <citation type="journal article" date="2017" name="Fen Zi Xi Bao Sheng Wu Xue Bao">
        <title>Human apo-SRP72 and SRP68/72 complex structures reveal the molecular basis of protein translocation.</title>
        <authorList>
            <person name="Gao Y."/>
            <person name="Zhang Q."/>
            <person name="Lang Y."/>
            <person name="Liu Y."/>
            <person name="Dong X."/>
            <person name="Chen Z."/>
            <person name="Tian W."/>
            <person name="Tang J."/>
            <person name="Wu W."/>
            <person name="Tong Y."/>
            <person name="Chen Z."/>
        </authorList>
    </citation>
    <scope>X-RAY CRYSTALLOGRAPHY (1.70 ANGSTROMS) OF 509-614 OF MUTANT 608-GLU--610-LYS IN COMPLEX WITH SRP78</scope>
    <scope>SUBUNIT</scope>
    <scope>INTERACTION WITH SRP72</scope>
    <scope>SUBCELLULAR LOCATION</scope>
    <scope>MUTAGENESIS OF PHE-590 AND GLN-609</scope>
</reference>
<reference evidence="15 16" key="19">
    <citation type="journal article" date="2017" name="Nucleic Acids Res.">
        <title>Structures of human SRP72 complexes provide insights into SRP RNA remodeling and ribosome interaction.</title>
        <authorList>
            <person name="Becker M.M."/>
            <person name="Lapouge K."/>
            <person name="Segnitz B."/>
            <person name="Wild K."/>
            <person name="Sinning I."/>
        </authorList>
    </citation>
    <scope>X-RAY CRYSTALLOGRAPHY (1.60 ANGSTROMS) OF 60-254 AND 546-614 IN COMPLEX WITH SRP72; SRP19 AND 7SL RNA</scope>
    <scope>RNA BINDING</scope>
    <scope>SUBUNIT</scope>
    <scope>INTERACTION WITH SRP72</scope>
    <scope>MUTAGENESIS OF TYR-86; ASP-592; VAL-598 AND PHE-600</scope>
</reference>
<reference evidence="18" key="20">
    <citation type="journal article" date="2021" name="Sci. Adv.">
        <title>Receptor compaction and GTPase rearrangement drive SRP-mediated cotranslational protein translocation into the ER.</title>
        <authorList>
            <person name="Lee J.H."/>
            <person name="Jomaa A."/>
            <person name="Jomaa A."/>
            <person name="Chung S."/>
            <person name="Hwang Fu Y.H."/>
            <person name="Qian R."/>
            <person name="Sun X."/>
            <person name="Hsieh H.H."/>
            <person name="Chandrasekar S."/>
            <person name="Bi X."/>
            <person name="Mattei S."/>
            <person name="Boehringer D."/>
            <person name="Weiss S."/>
            <person name="Ban N."/>
            <person name="Shan S.O."/>
        </authorList>
    </citation>
    <scope>STRUCTURE BY ELECTRON MICROSCOPY (3.20 ANGSTROMS) OF SIGNAL RECOGNITION PARTICLE IN COMPLEX WITH RIBOSOME NASCENT CHAIN COMPLEX AND THE SRP RECEPTOR</scope>
    <scope>FUNCTION</scope>
</reference>
<sequence length="627" mass="70730">MAAEKQVPGGGGGGGSGGGGGSGGGGSGGGRGAGGEENKENERPSAGSKANKEFGDSLSLEILQIIKESQQQHGLRHGDFQRYRGYCSRRQRRLRKTLNFKMGNRHKFTGKKVTEELLTDNRYLLLVLMDAERAWSYAMQLKQEANTEPRKRFHLLSRLRKAVKHAEELERLCESNRVDAKTKLEAQAYTAYLSGMLRFEHQEWKAAIEAFNKCKTIYEKLASAFTEEQAVLYNQRVEEISPNIRYCAYNIGDQSAINELMQMRLRSGGTEGLLAEKLEALITQTRAKQAATMSEVEWRGRTVPVKIDKVRIFLLGLADNEAAIVQAESEETKERLFESMLSECRDAIQVVREELKPDQKQRDYILEGEPGKVSNLQYLHSYLTYIKLSTAIKRNENMAKGLQRALLQQQPEDDSKRSPRPQDLIRLYDIILQNLVELLQLPGLEEDKAFQKEIGLKTLVFKAYRCFFIAQSYVLVKKWSEALVLYDRVLKYANEVNSDAGAFKNSLKDLPDVQELITQVRSEKCSLQAAAILDANDAHQTETSSSQVKDNKPLVERFETFCLDPSLVTKQANLVHFPPGFQPIPCKPLFFDLALNHVAFPPLEDKLEQKTKSGLTGYIKGIFGFRS</sequence>
<proteinExistence type="evidence at protein level"/>
<name>SRP68_HUMAN</name>
<accession>Q9UHB9</accession>
<accession>B3KUU5</accession>
<accession>B3KWY7</accession>
<accession>G3V1U4</accession>
<accession>Q8NCJ4</accession>
<accession>Q8WUK2</accession>
<dbReference type="EMBL" id="AF195951">
    <property type="protein sequence ID" value="AAF24308.1"/>
    <property type="molecule type" value="mRNA"/>
</dbReference>
<dbReference type="EMBL" id="AK074698">
    <property type="protein sequence ID" value="BAC11145.1"/>
    <property type="molecule type" value="mRNA"/>
</dbReference>
<dbReference type="EMBL" id="AK097962">
    <property type="protein sequence ID" value="BAG53557.1"/>
    <property type="molecule type" value="mRNA"/>
</dbReference>
<dbReference type="EMBL" id="AK126258">
    <property type="protein sequence ID" value="BAG54299.1"/>
    <property type="molecule type" value="mRNA"/>
</dbReference>
<dbReference type="EMBL" id="AC040980">
    <property type="status" value="NOT_ANNOTATED_CDS"/>
    <property type="molecule type" value="Genomic_DNA"/>
</dbReference>
<dbReference type="EMBL" id="CH471099">
    <property type="protein sequence ID" value="EAW89360.1"/>
    <property type="molecule type" value="Genomic_DNA"/>
</dbReference>
<dbReference type="EMBL" id="CH471099">
    <property type="protein sequence ID" value="EAW89362.1"/>
    <property type="molecule type" value="Genomic_DNA"/>
</dbReference>
<dbReference type="EMBL" id="BC020238">
    <property type="protein sequence ID" value="AAH20238.1"/>
    <property type="molecule type" value="mRNA"/>
</dbReference>
<dbReference type="CCDS" id="CCDS11738.1">
    <molecule id="Q9UHB9-1"/>
</dbReference>
<dbReference type="CCDS" id="CCDS58600.1">
    <molecule id="Q9UHB9-3"/>
</dbReference>
<dbReference type="CCDS" id="CCDS58601.1">
    <molecule id="Q9UHB9-4"/>
</dbReference>
<dbReference type="RefSeq" id="NP_001247431.1">
    <molecule id="Q9UHB9-4"/>
    <property type="nucleotide sequence ID" value="NM_001260502.2"/>
</dbReference>
<dbReference type="RefSeq" id="NP_001247432.1">
    <molecule id="Q9UHB9-3"/>
    <property type="nucleotide sequence ID" value="NM_001260503.2"/>
</dbReference>
<dbReference type="RefSeq" id="NP_055045.2">
    <molecule id="Q9UHB9-1"/>
    <property type="nucleotide sequence ID" value="NM_014230.3"/>
</dbReference>
<dbReference type="PDB" id="4P3E">
    <property type="method" value="X-ray"/>
    <property type="resolution" value="3.50 A"/>
    <property type="chains" value="C=47-254"/>
</dbReference>
<dbReference type="PDB" id="4P3F">
    <property type="method" value="X-ray"/>
    <property type="resolution" value="1.70 A"/>
    <property type="chains" value="A/B=47-254"/>
</dbReference>
<dbReference type="PDB" id="5M72">
    <property type="method" value="X-ray"/>
    <property type="resolution" value="1.60 A"/>
    <property type="chains" value="B=546-614"/>
</dbReference>
<dbReference type="PDB" id="5M73">
    <property type="method" value="X-ray"/>
    <property type="resolution" value="3.40 A"/>
    <property type="chains" value="C/G=60-254"/>
</dbReference>
<dbReference type="PDB" id="5WRV">
    <property type="method" value="X-ray"/>
    <property type="resolution" value="1.70 A"/>
    <property type="chains" value="A=509-614"/>
</dbReference>
<dbReference type="PDB" id="7NFX">
    <property type="method" value="EM"/>
    <property type="resolution" value="3.20 A"/>
    <property type="chains" value="u=1-627"/>
</dbReference>
<dbReference type="PDB" id="7QWQ">
    <property type="method" value="EM"/>
    <property type="resolution" value="2.83 A"/>
    <property type="chains" value="v=1-627"/>
</dbReference>
<dbReference type="PDB" id="8QVW">
    <property type="method" value="EM"/>
    <property type="resolution" value="3.00 A"/>
    <property type="chains" value="A=52-627"/>
</dbReference>
<dbReference type="PDB" id="8QVX">
    <property type="method" value="EM"/>
    <property type="resolution" value="2.70 A"/>
    <property type="chains" value="A=52-627"/>
</dbReference>
<dbReference type="PDBsum" id="4P3E"/>
<dbReference type="PDBsum" id="4P3F"/>
<dbReference type="PDBsum" id="5M72"/>
<dbReference type="PDBsum" id="5M73"/>
<dbReference type="PDBsum" id="5WRV"/>
<dbReference type="PDBsum" id="7NFX"/>
<dbReference type="PDBsum" id="7QWQ"/>
<dbReference type="PDBsum" id="8QVW"/>
<dbReference type="PDBsum" id="8QVX"/>
<dbReference type="EMDB" id="EMD-12303"/>
<dbReference type="EMDB" id="EMD-14191"/>
<dbReference type="EMDB" id="EMD-18674"/>
<dbReference type="EMDB" id="EMD-18677"/>
<dbReference type="SMR" id="Q9UHB9"/>
<dbReference type="BioGRID" id="112608">
    <property type="interactions" value="388"/>
</dbReference>
<dbReference type="ComplexPortal" id="CPX-2652">
    <property type="entry name" value="Signal recognition particle"/>
</dbReference>
<dbReference type="DIP" id="DIP-50905N"/>
<dbReference type="FunCoup" id="Q9UHB9">
    <property type="interactions" value="2591"/>
</dbReference>
<dbReference type="IntAct" id="Q9UHB9">
    <property type="interactions" value="273"/>
</dbReference>
<dbReference type="MINT" id="Q9UHB9"/>
<dbReference type="STRING" id="9606.ENSP00000312066"/>
<dbReference type="TCDB" id="3.A.5.9.1">
    <property type="family name" value="the general secretory pathway (sec) family"/>
</dbReference>
<dbReference type="GlyGen" id="Q9UHB9">
    <property type="glycosylation" value="1 site, 1 O-linked glycan (1 site)"/>
</dbReference>
<dbReference type="iPTMnet" id="Q9UHB9"/>
<dbReference type="PhosphoSitePlus" id="Q9UHB9"/>
<dbReference type="SwissPalm" id="Q9UHB9"/>
<dbReference type="BioMuta" id="SRP68"/>
<dbReference type="DMDM" id="37154869"/>
<dbReference type="jPOST" id="Q9UHB9"/>
<dbReference type="MassIVE" id="Q9UHB9"/>
<dbReference type="PaxDb" id="9606-ENSP00000312066"/>
<dbReference type="PeptideAtlas" id="Q9UHB9"/>
<dbReference type="ProteomicsDB" id="32444"/>
<dbReference type="ProteomicsDB" id="3735"/>
<dbReference type="ProteomicsDB" id="84303">
    <molecule id="Q9UHB9-1"/>
</dbReference>
<dbReference type="ProteomicsDB" id="84304">
    <molecule id="Q9UHB9-2"/>
</dbReference>
<dbReference type="Pumba" id="Q9UHB9"/>
<dbReference type="Antibodypedia" id="19656">
    <property type="antibodies" value="136 antibodies from 24 providers"/>
</dbReference>
<dbReference type="DNASU" id="6730"/>
<dbReference type="Ensembl" id="ENST00000307877.7">
    <molecule id="Q9UHB9-1"/>
    <property type="protein sequence ID" value="ENSP00000312066.1"/>
    <property type="gene ID" value="ENSG00000167881.15"/>
</dbReference>
<dbReference type="Ensembl" id="ENST00000539137.5">
    <molecule id="Q9UHB9-4"/>
    <property type="protein sequence ID" value="ENSP00000446136.1"/>
    <property type="gene ID" value="ENSG00000167881.15"/>
</dbReference>
<dbReference type="Ensembl" id="ENST00000602720.5">
    <molecule id="Q9UHB9-3"/>
    <property type="protein sequence ID" value="ENSP00000473613.1"/>
    <property type="gene ID" value="ENSG00000167881.15"/>
</dbReference>
<dbReference type="GeneID" id="6730"/>
<dbReference type="KEGG" id="hsa:6730"/>
<dbReference type="MANE-Select" id="ENST00000307877.7">
    <property type="protein sequence ID" value="ENSP00000312066.1"/>
    <property type="RefSeq nucleotide sequence ID" value="NM_014230.4"/>
    <property type="RefSeq protein sequence ID" value="NP_055045.2"/>
</dbReference>
<dbReference type="UCSC" id="uc002jqj.3">
    <molecule id="Q9UHB9-1"/>
    <property type="organism name" value="human"/>
</dbReference>
<dbReference type="AGR" id="HGNC:11302"/>
<dbReference type="CTD" id="6730"/>
<dbReference type="GeneCards" id="SRP68"/>
<dbReference type="HGNC" id="HGNC:11302">
    <property type="gene designation" value="SRP68"/>
</dbReference>
<dbReference type="HPA" id="ENSG00000167881">
    <property type="expression patterns" value="Low tissue specificity"/>
</dbReference>
<dbReference type="MalaCards" id="SRP68"/>
<dbReference type="MIM" id="604858">
    <property type="type" value="gene"/>
</dbReference>
<dbReference type="MIM" id="620534">
    <property type="type" value="phenotype"/>
</dbReference>
<dbReference type="neXtProt" id="NX_Q9UHB9"/>
<dbReference type="OpenTargets" id="ENSG00000167881"/>
<dbReference type="PharmGKB" id="PA36126"/>
<dbReference type="VEuPathDB" id="HostDB:ENSG00000167881"/>
<dbReference type="eggNOG" id="KOG2460">
    <property type="taxonomic scope" value="Eukaryota"/>
</dbReference>
<dbReference type="GeneTree" id="ENSGT00390000011856"/>
<dbReference type="HOGENOM" id="CLU_084496_0_0_1"/>
<dbReference type="InParanoid" id="Q9UHB9"/>
<dbReference type="OMA" id="DERFIHI"/>
<dbReference type="OrthoDB" id="10255118at2759"/>
<dbReference type="PAN-GO" id="Q9UHB9">
    <property type="GO annotations" value="2 GO annotations based on evolutionary models"/>
</dbReference>
<dbReference type="PhylomeDB" id="Q9UHB9"/>
<dbReference type="TreeFam" id="TF105779"/>
<dbReference type="PathwayCommons" id="Q9UHB9"/>
<dbReference type="Reactome" id="R-HSA-1799339">
    <property type="pathway name" value="SRP-dependent cotranslational protein targeting to membrane"/>
</dbReference>
<dbReference type="SignaLink" id="Q9UHB9"/>
<dbReference type="SIGNOR" id="Q9UHB9"/>
<dbReference type="BioGRID-ORCS" id="6730">
    <property type="hits" value="654 hits in 1168 CRISPR screens"/>
</dbReference>
<dbReference type="CD-CODE" id="91857CE7">
    <property type="entry name" value="Nucleolus"/>
</dbReference>
<dbReference type="CD-CODE" id="DEE660B4">
    <property type="entry name" value="Stress granule"/>
</dbReference>
<dbReference type="ChiTaRS" id="SRP68">
    <property type="organism name" value="human"/>
</dbReference>
<dbReference type="EvolutionaryTrace" id="Q9UHB9"/>
<dbReference type="GenomeRNAi" id="6730"/>
<dbReference type="Pharos" id="Q9UHB9">
    <property type="development level" value="Tbio"/>
</dbReference>
<dbReference type="PRO" id="PR:Q9UHB9"/>
<dbReference type="Proteomes" id="UP000005640">
    <property type="component" value="Chromosome 17"/>
</dbReference>
<dbReference type="RNAct" id="Q9UHB9">
    <property type="molecule type" value="protein"/>
</dbReference>
<dbReference type="Bgee" id="ENSG00000167881">
    <property type="expression patterns" value="Expressed in tibialis anterior and 184 other cell types or tissues"/>
</dbReference>
<dbReference type="ExpressionAtlas" id="Q9UHB9">
    <property type="expression patterns" value="baseline and differential"/>
</dbReference>
<dbReference type="GO" id="GO:0005829">
    <property type="term" value="C:cytosol"/>
    <property type="evidence" value="ECO:0000314"/>
    <property type="project" value="HPA"/>
</dbReference>
<dbReference type="GO" id="GO:0005783">
    <property type="term" value="C:endoplasmic reticulum"/>
    <property type="evidence" value="ECO:0000304"/>
    <property type="project" value="ProtInc"/>
</dbReference>
<dbReference type="GO" id="GO:0005925">
    <property type="term" value="C:focal adhesion"/>
    <property type="evidence" value="ECO:0000314"/>
    <property type="project" value="HPA"/>
</dbReference>
<dbReference type="GO" id="GO:0005730">
    <property type="term" value="C:nucleolus"/>
    <property type="evidence" value="ECO:0000304"/>
    <property type="project" value="ProtInc"/>
</dbReference>
<dbReference type="GO" id="GO:0005840">
    <property type="term" value="C:ribosome"/>
    <property type="evidence" value="ECO:0000304"/>
    <property type="project" value="ProtInc"/>
</dbReference>
<dbReference type="GO" id="GO:0048500">
    <property type="term" value="C:signal recognition particle"/>
    <property type="evidence" value="ECO:0000314"/>
    <property type="project" value="CAFA"/>
</dbReference>
<dbReference type="GO" id="GO:0005786">
    <property type="term" value="C:signal recognition particle, endoplasmic reticulum targeting"/>
    <property type="evidence" value="ECO:0000314"/>
    <property type="project" value="UniProtKB"/>
</dbReference>
<dbReference type="GO" id="GO:0008312">
    <property type="term" value="F:7S RNA binding"/>
    <property type="evidence" value="ECO:0000315"/>
    <property type="project" value="CAFA"/>
</dbReference>
<dbReference type="GO" id="GO:0030942">
    <property type="term" value="F:endoplasmic reticulum signal peptide binding"/>
    <property type="evidence" value="ECO:0007669"/>
    <property type="project" value="InterPro"/>
</dbReference>
<dbReference type="GO" id="GO:0019904">
    <property type="term" value="F:protein domain specific binding"/>
    <property type="evidence" value="ECO:0000353"/>
    <property type="project" value="CAFA"/>
</dbReference>
<dbReference type="GO" id="GO:0003723">
    <property type="term" value="F:RNA binding"/>
    <property type="evidence" value="ECO:0007005"/>
    <property type="project" value="UniProtKB"/>
</dbReference>
<dbReference type="GO" id="GO:0005047">
    <property type="term" value="F:signal recognition particle binding"/>
    <property type="evidence" value="ECO:0000353"/>
    <property type="project" value="UniProtKB"/>
</dbReference>
<dbReference type="GO" id="GO:0009410">
    <property type="term" value="P:response to xenobiotic stimulus"/>
    <property type="evidence" value="ECO:0000314"/>
    <property type="project" value="UniProtKB"/>
</dbReference>
<dbReference type="GO" id="GO:0006614">
    <property type="term" value="P:SRP-dependent cotranslational protein targeting to membrane"/>
    <property type="evidence" value="ECO:0000318"/>
    <property type="project" value="GO_Central"/>
</dbReference>
<dbReference type="CDD" id="cd15481">
    <property type="entry name" value="SRP68-RBD"/>
    <property type="match status" value="1"/>
</dbReference>
<dbReference type="FunFam" id="1.10.3450.40:FF:000001">
    <property type="entry name" value="Signal recognition particle subunit SRP68"/>
    <property type="match status" value="1"/>
</dbReference>
<dbReference type="Gene3D" id="1.10.3450.40">
    <property type="entry name" value="Signal recognition particle, SRP68 subunit, RNA-binding domain"/>
    <property type="match status" value="1"/>
</dbReference>
<dbReference type="InterPro" id="IPR026258">
    <property type="entry name" value="SRP68"/>
</dbReference>
<dbReference type="InterPro" id="IPR034652">
    <property type="entry name" value="SRP68-RBD"/>
</dbReference>
<dbReference type="InterPro" id="IPR038253">
    <property type="entry name" value="SRP68_N_sf"/>
</dbReference>
<dbReference type="PANTHER" id="PTHR12860">
    <property type="entry name" value="SIGNAL RECOGNITION PARTICLE 68 KDA PROTEIN"/>
    <property type="match status" value="1"/>
</dbReference>
<dbReference type="PANTHER" id="PTHR12860:SF0">
    <property type="entry name" value="SIGNAL RECOGNITION PARTICLE SUBUNIT SRP68"/>
    <property type="match status" value="1"/>
</dbReference>
<dbReference type="Pfam" id="PF16969">
    <property type="entry name" value="SRP68"/>
    <property type="match status" value="1"/>
</dbReference>
<dbReference type="PIRSF" id="PIRSF038995">
    <property type="entry name" value="SRP68"/>
    <property type="match status" value="1"/>
</dbReference>
<gene>
    <name type="primary">SRP68</name>
</gene>
<comment type="function">
    <text evidence="1 5 6 9">Component of the signal recognition particle (SRP) complex, a ribonucleoprotein complex that mediates the cotranslational targeting of secretory and membrane proteins to the endoplasmic reticulum (ER) (PubMed:34020957). The SRP complex interacts with the signal sequence in nascent secretory and membrane proteins and directs them to the membrane of the ER (PubMed:34020957). The SRP complex targets the ribosome-nascent chain complex to the SRP receptor (SR), which is anchored in the ER, where SR compaction and GTPase rearrangement drive cotranslational protein translocation into the ER (PubMed:34020957). Binds the signal recognition particle RNA (7SL RNA), SRP72 binds to this complex subsequently (PubMed:16672232, PubMed:27899666). The SRP complex possibly participates in the elongation arrest function (By similarity).</text>
</comment>
<comment type="subunit">
    <text evidence="2 5 6 7">Heterodimer with SRP72 (PubMed:16672232, PubMed:27899666, PubMed:28369529). SRP68/SRP72 heterodimer formation is stabilized by the presence of 7SL RNA (By similarity). Component of a signal recognition particle (SRP) complex that consists of a 7SL RNA molecule of 300 nucleotides and six protein subunits: SRP72, SRP68, SRP54, SRP19, SRP14 and SRP9 (By similarity). Within the SRP complex, interacts (via C-terminus) with SRP72 (via N-terminus) (PubMed:16672232, PubMed:27899666, PubMed:28369529).</text>
</comment>
<comment type="interaction">
    <interactant intactId="EBI-1048560">
        <id>Q9UHB9</id>
    </interactant>
    <interactant intactId="EBI-349854">
        <id>P13569</id>
        <label>CFTR</label>
    </interactant>
    <organismsDiffer>false</organismsDiffer>
    <experiments>7</experiments>
</comment>
<comment type="interaction">
    <interactant intactId="EBI-1048560">
        <id>Q9UHB9</id>
    </interactant>
    <interactant intactId="EBI-2680090">
        <id>P09132</id>
        <label>SRP19</label>
    </interactant>
    <organismsDiffer>false</organismsDiffer>
    <experiments>6</experiments>
</comment>
<comment type="interaction">
    <interactant intactId="EBI-1048560">
        <id>Q9UHB9</id>
    </interactant>
    <interactant intactId="EBI-1058850">
        <id>O76094</id>
        <label>SRP72</label>
    </interactant>
    <organismsDiffer>false</organismsDiffer>
    <experiments>9</experiments>
</comment>
<comment type="interaction">
    <interactant intactId="EBI-12210563">
        <id>Q9UHB9-2</id>
    </interactant>
    <interactant intactId="EBI-947187">
        <id>Q9UHD9</id>
        <label>UBQLN2</label>
    </interactant>
    <organismsDiffer>false</organismsDiffer>
    <experiments>3</experiments>
</comment>
<comment type="subcellular location">
    <subcellularLocation>
        <location evidence="4">Cytoplasm</location>
    </subcellularLocation>
    <subcellularLocation>
        <location evidence="4">Nucleus</location>
        <location evidence="4">Nucleolus</location>
    </subcellularLocation>
    <subcellularLocation>
        <location evidence="7">Endoplasmic reticulum</location>
    </subcellularLocation>
</comment>
<comment type="alternative products">
    <event type="alternative splicing"/>
    <isoform>
        <id>Q9UHB9-1</id>
        <name>1</name>
        <sequence type="displayed"/>
    </isoform>
    <isoform>
        <id>Q9UHB9-2</id>
        <name>2</name>
        <sequence type="described" ref="VSP_008347"/>
    </isoform>
    <isoform>
        <id>Q9UHB9-3</id>
        <name>3</name>
        <sequence type="described" ref="VSP_045132"/>
    </isoform>
    <isoform>
        <id>Q9UHB9-4</id>
        <name>4</name>
        <sequence type="described" ref="VSP_046944"/>
    </isoform>
</comment>
<comment type="domain">
    <text evidence="5">The N-terminus is required for RNA-binding.</text>
</comment>
<comment type="disease" evidence="8">
    <disease id="DI-06772">
        <name>Neutropenia, severe congenital, 10, autosomal recessive</name>
        <acronym>SCN10</acronym>
        <description>A form of severe congenital neutropenia, a disorder of hematopoiesis characterized by maturation arrest of granulopoiesis at the level of promyelocytes with peripheral blood absolute neutrophil counts below 0.5 x 10(9)/l, and early onset of severe bacterial infections. SCN10 is characterized by infantile onset of neutropenia. Anemia and thrombocytopenia may be transiently present.</description>
        <dbReference type="MIM" id="620534"/>
    </disease>
    <text>The disease may be caused by variants affecting the gene represented in this entry.</text>
</comment>
<comment type="similarity">
    <text evidence="12">Belongs to the SRP68 family.</text>
</comment>
<comment type="online information" name="Wikipedia">
    <link uri="https://en.wikipedia.org/wiki/Signal-recognition_particle"/>
    <text>Signal recognition particle entry</text>
</comment>